<gene>
    <name evidence="9" type="primary">TPS7</name>
</gene>
<dbReference type="EC" id="4.2.3.106" evidence="6 7"/>
<dbReference type="EMBL" id="GU385967">
    <property type="protein sequence ID" value="ADK73614.1"/>
    <property type="molecule type" value="mRNA"/>
</dbReference>
<dbReference type="SMR" id="E2E2N3"/>
<dbReference type="UniPathway" id="UPA00213"/>
<dbReference type="GO" id="GO:0009507">
    <property type="term" value="C:chloroplast"/>
    <property type="evidence" value="ECO:0007669"/>
    <property type="project" value="UniProtKB-SubCell"/>
</dbReference>
<dbReference type="GO" id="GO:0000287">
    <property type="term" value="F:magnesium ion binding"/>
    <property type="evidence" value="ECO:0007669"/>
    <property type="project" value="InterPro"/>
</dbReference>
<dbReference type="GO" id="GO:0042803">
    <property type="term" value="F:protein homodimerization activity"/>
    <property type="evidence" value="ECO:0000250"/>
    <property type="project" value="UniProtKB"/>
</dbReference>
<dbReference type="GO" id="GO:0010333">
    <property type="term" value="F:terpene synthase activity"/>
    <property type="evidence" value="ECO:0007669"/>
    <property type="project" value="InterPro"/>
</dbReference>
<dbReference type="GO" id="GO:0016102">
    <property type="term" value="P:diterpenoid biosynthetic process"/>
    <property type="evidence" value="ECO:0007669"/>
    <property type="project" value="InterPro"/>
</dbReference>
<dbReference type="CDD" id="cd00684">
    <property type="entry name" value="Terpene_cyclase_plant_C1"/>
    <property type="match status" value="1"/>
</dbReference>
<dbReference type="FunFam" id="1.10.600.10:FF:000007">
    <property type="entry name" value="Isoprene synthase, chloroplastic"/>
    <property type="match status" value="1"/>
</dbReference>
<dbReference type="FunFam" id="1.50.10.130:FF:000001">
    <property type="entry name" value="Isoprene synthase, chloroplastic"/>
    <property type="match status" value="1"/>
</dbReference>
<dbReference type="Gene3D" id="1.10.600.10">
    <property type="entry name" value="Farnesyl Diphosphate Synthase"/>
    <property type="match status" value="1"/>
</dbReference>
<dbReference type="Gene3D" id="1.50.10.130">
    <property type="entry name" value="Terpene synthase, N-terminal domain"/>
    <property type="match status" value="1"/>
</dbReference>
<dbReference type="InterPro" id="IPR008949">
    <property type="entry name" value="Isoprenoid_synthase_dom_sf"/>
</dbReference>
<dbReference type="InterPro" id="IPR034741">
    <property type="entry name" value="Terpene_cyclase-like_1_C"/>
</dbReference>
<dbReference type="InterPro" id="IPR044814">
    <property type="entry name" value="Terpene_cyclase_plant_C1"/>
</dbReference>
<dbReference type="InterPro" id="IPR001906">
    <property type="entry name" value="Terpene_synth_N"/>
</dbReference>
<dbReference type="InterPro" id="IPR036965">
    <property type="entry name" value="Terpene_synth_N_sf"/>
</dbReference>
<dbReference type="InterPro" id="IPR050148">
    <property type="entry name" value="Terpene_synthase-like"/>
</dbReference>
<dbReference type="InterPro" id="IPR005630">
    <property type="entry name" value="Terpene_synthase_metal-bd"/>
</dbReference>
<dbReference type="InterPro" id="IPR008930">
    <property type="entry name" value="Terpenoid_cyclase/PrenylTrfase"/>
</dbReference>
<dbReference type="PANTHER" id="PTHR31225">
    <property type="entry name" value="OS04G0344100 PROTEIN-RELATED"/>
    <property type="match status" value="1"/>
</dbReference>
<dbReference type="PANTHER" id="PTHR31225:SF9">
    <property type="entry name" value="TERPENE SYNTHASE 10"/>
    <property type="match status" value="1"/>
</dbReference>
<dbReference type="Pfam" id="PF01397">
    <property type="entry name" value="Terpene_synth"/>
    <property type="match status" value="1"/>
</dbReference>
<dbReference type="Pfam" id="PF03936">
    <property type="entry name" value="Terpene_synth_C"/>
    <property type="match status" value="1"/>
</dbReference>
<dbReference type="SFLD" id="SFLDS00005">
    <property type="entry name" value="Isoprenoid_Synthase_Type_I"/>
    <property type="match status" value="1"/>
</dbReference>
<dbReference type="SFLD" id="SFLDG01019">
    <property type="entry name" value="Terpene_Cyclase_Like_1_C_Termi"/>
    <property type="match status" value="1"/>
</dbReference>
<dbReference type="SUPFAM" id="SSF48239">
    <property type="entry name" value="Terpenoid cyclases/Protein prenyltransferases"/>
    <property type="match status" value="1"/>
</dbReference>
<dbReference type="SUPFAM" id="SSF48576">
    <property type="entry name" value="Terpenoid synthases"/>
    <property type="match status" value="1"/>
</dbReference>
<proteinExistence type="evidence at protein level"/>
<sequence length="595" mass="69381">MSTISINLMSIIRNPLHSKSKRALINKHPSSSASRLVQPCRISSKIDTKPAEITRRSGNYEPSLWDFDYLQSLNTHHHYKKEEQLKREEELIVQVKMLLGTKMEAVEQLELIDDLKNLGLSYFFRDEIKKILTSIYNNSFENNNKVGDLYFTALGFRLLRQHGFNVSQRIFDCFKNEKGSHFDETLIGEDIKATLQLYEASFHLREGENTLELARQISTKYLQKMVDEGRINDENLSSWIRHSLDLPLHWRIQRLEARWFLDAYAVREDKNPLIFELAKLDFNIIQATQQEELKEVSRWWNDSCLAEKLPFLRDRIVEAYFWGVALFELLEFGYQRKITAIIIILVTAIDDVYDVYGTLDELQLFTDVIRRWNTQSIDQLPYYMQLCYMTLYNYVSNLGYEILKDRGINTIPHIHQSWVSLVEAFLKEEEWYESGYTPSLKEYLNNASISVGAIAVVIALELSIPNSTIHHRTRIDHRHKILHLSGLVSRLANDLGTAQHEMEKGNVPTAIQCYMKDTNASEEEAWEHVRFMIGEAWKRLNTAMAEADDCPFTEQAVEAAANFGRAAQFIYREGDGHGHFQIHQHVENLFFHPYV</sequence>
<keyword id="KW-0150">Chloroplast</keyword>
<keyword id="KW-0456">Lyase</keyword>
<keyword id="KW-0460">Magnesium</keyword>
<keyword id="KW-0464">Manganese</keyword>
<keyword id="KW-0479">Metal-binding</keyword>
<keyword id="KW-0934">Plastid</keyword>
<keyword id="KW-0809">Transit peptide</keyword>
<organism>
    <name type="scientific">Origanum vulgare</name>
    <name type="common">Wild marjoram</name>
    <dbReference type="NCBI Taxonomy" id="39352"/>
    <lineage>
        <taxon>Eukaryota</taxon>
        <taxon>Viridiplantae</taxon>
        <taxon>Streptophyta</taxon>
        <taxon>Embryophyta</taxon>
        <taxon>Tracheophyta</taxon>
        <taxon>Spermatophyta</taxon>
        <taxon>Magnoliopsida</taxon>
        <taxon>eudicotyledons</taxon>
        <taxon>Gunneridae</taxon>
        <taxon>Pentapetalae</taxon>
        <taxon>asterids</taxon>
        <taxon>lamiids</taxon>
        <taxon>Lamiales</taxon>
        <taxon>Lamiaceae</taxon>
        <taxon>Nepetoideae</taxon>
        <taxon>Mentheae</taxon>
        <taxon>Origanum</taxon>
    </lineage>
</organism>
<evidence type="ECO:0000250" key="1">
    <source>
        <dbReference type="UniProtKB" id="A0A0M3Q1Q3"/>
    </source>
</evidence>
<evidence type="ECO:0000250" key="2">
    <source>
        <dbReference type="UniProtKB" id="A0A1C9J6A7"/>
    </source>
</evidence>
<evidence type="ECO:0000250" key="3">
    <source>
        <dbReference type="UniProtKB" id="E2E2P0"/>
    </source>
</evidence>
<evidence type="ECO:0000250" key="4">
    <source>
        <dbReference type="UniProtKB" id="Q9X839"/>
    </source>
</evidence>
<evidence type="ECO:0000255" key="5"/>
<evidence type="ECO:0000269" key="6">
    <source>
    </source>
</evidence>
<evidence type="ECO:0000269" key="7">
    <source ref="2"/>
</evidence>
<evidence type="ECO:0000269" key="8">
    <source ref="3"/>
</evidence>
<evidence type="ECO:0000303" key="9">
    <source>
    </source>
</evidence>
<evidence type="ECO:0000305" key="10"/>
<name>BOMS_ORIVU</name>
<accession>E2E2N3</accession>
<comment type="function">
    <text evidence="6 7">Involved in the biosynthesis of monoterpenes natural products (Ref.2). Monoterpene synthase that catalyzes mainly the formation of (E)-beta-ocimene and minor amounts of other monoterpenes (e.g. myrcene, (Z)-beta-ocimene, alpha- and gamma-terpinene) from geranyl diphosphate (GPP) (PubMed:20419468, Ref.2).</text>
</comment>
<comment type="catalytic activity">
    <reaction evidence="6 7">
        <text>(2E)-geranyl diphosphate = (E)-beta-ocimene + diphosphate</text>
        <dbReference type="Rhea" id="RHEA:32691"/>
        <dbReference type="ChEBI" id="CHEBI:33019"/>
        <dbReference type="ChEBI" id="CHEBI:58057"/>
        <dbReference type="ChEBI" id="CHEBI:64280"/>
        <dbReference type="EC" id="4.2.3.106"/>
    </reaction>
    <physiologicalReaction direction="left-to-right" evidence="6 7">
        <dbReference type="Rhea" id="RHEA:32692"/>
    </physiologicalReaction>
</comment>
<comment type="cofactor">
    <cofactor evidence="3">
        <name>Mn(2+)</name>
        <dbReference type="ChEBI" id="CHEBI:29035"/>
    </cofactor>
    <cofactor evidence="3">
        <name>Mg(2+)</name>
        <dbReference type="ChEBI" id="CHEBI:18420"/>
    </cofactor>
    <text evidence="3">Binds 3 Mg(2+) or Mn(2+) ions per subunit.</text>
</comment>
<comment type="pathway">
    <text evidence="6 7">Secondary metabolite biosynthesis; terpenoid biosynthesis.</text>
</comment>
<comment type="subunit">
    <text evidence="1">Homodimer.</text>
</comment>
<comment type="subcellular location">
    <subcellularLocation>
        <location evidence="5">Plastid</location>
        <location evidence="5">Chloroplast</location>
    </subcellularLocation>
</comment>
<comment type="tissue specificity">
    <text evidence="6 8">Expressed in peltate glandular trichomes (PubMed:20419468). Present in flowers, leaves and stems (Ref.3).</text>
</comment>
<comment type="domain">
    <text evidence="4">The Asp-Asp-Xaa-Xaa-Asp/Glu (DDXXD/E) motif is important for the catalytic activity, presumably through binding to Mg(2+).</text>
</comment>
<comment type="similarity">
    <text evidence="10">Belongs to the terpene synthase family.</text>
</comment>
<reference key="1">
    <citation type="journal article" date="2010" name="Plant Mol. Biol.">
        <title>Terpene synthases of oregano (Origanum vulgare L.) and their roles in the pathway and regulation of terpene biosynthesis.</title>
        <authorList>
            <person name="Crocoll C."/>
            <person name="Asbach J."/>
            <person name="Novak J."/>
            <person name="Gershenzon J."/>
            <person name="Degenhardt J."/>
        </authorList>
    </citation>
    <scope>NUCLEOTIDE SEQUENCE [MRNA]</scope>
    <scope>FUNCTION</scope>
    <scope>CATALYTIC ACTIVITY</scope>
    <scope>PATHWAY</scope>
    <scope>TISSUE SPECIFICITY</scope>
    <source>
        <strain>cv. f02-04</strain>
        <tissue>Trichome gland</tissue>
    </source>
</reference>
<reference key="2">
    <citation type="thesis" date="2011" institute="Friedrich Schiller University of Jena" country="Germany">
        <title>Biosynthesis of the phenolic monoterpenes, thymol and carvacrol, by terpene synthases and cytochrome P450s in oregano and thyme.</title>
        <authorList>
            <person name="Crocoll C."/>
        </authorList>
    </citation>
    <scope>FUNCTION</scope>
    <scope>CATALYTIC ACTIVITY</scope>
    <scope>PATHWAY</scope>
</reference>
<reference key="3">
    <citation type="journal article" date="2018" name="Ind. Crops Prod.">
        <title>Divergence in tissue-specific expression patterns of genes associated with the terpenoid biosynthesis in two oregano species Origanum vulgare L., and Origanum majorana.</title>
        <authorList>
            <person name="Jan S."/>
            <person name="Mir J.I."/>
            <person name="Shafi W."/>
            <person name="Faktoo S.Z."/>
            <person name="Singh D.B."/>
            <person name="Wijaya L."/>
            <person name="Alyemeni M.N."/>
            <person name="Ahmad P."/>
        </authorList>
    </citation>
    <scope>TISSUE SPECIFICITY</scope>
</reference>
<protein>
    <recommendedName>
        <fullName evidence="9">(E)-beta-ocimene synthase, chloroplastic</fullName>
        <ecNumber evidence="6 7">4.2.3.106</ecNumber>
    </recommendedName>
    <alternativeName>
        <fullName evidence="9">Terpene synthase 7</fullName>
        <shortName evidence="9">OvTPS7</shortName>
    </alternativeName>
</protein>
<feature type="transit peptide" description="Chloroplast" evidence="5">
    <location>
        <begin position="1"/>
        <end position="32"/>
    </location>
</feature>
<feature type="chain" id="PRO_0000453321" description="(E)-beta-ocimene synthase, chloroplastic">
    <location>
        <begin position="33"/>
        <end position="595"/>
    </location>
</feature>
<feature type="region of interest" description="Homodimerization" evidence="1">
    <location>
        <begin position="356"/>
        <end position="362"/>
    </location>
</feature>
<feature type="region of interest" description="Homodimerization" evidence="1">
    <location>
        <begin position="428"/>
        <end position="465"/>
    </location>
</feature>
<feature type="short sequence motif" description="DDXXD motif" evidence="4">
    <location>
        <begin position="350"/>
        <end position="354"/>
    </location>
</feature>
<feature type="binding site" evidence="2">
    <location>
        <position position="350"/>
    </location>
    <ligand>
        <name>Mn(2+)</name>
        <dbReference type="ChEBI" id="CHEBI:29035"/>
        <label>1</label>
    </ligand>
</feature>
<feature type="binding site" evidence="2">
    <location>
        <position position="350"/>
    </location>
    <ligand>
        <name>Mn(2+)</name>
        <dbReference type="ChEBI" id="CHEBI:29035"/>
        <label>2</label>
    </ligand>
</feature>
<feature type="binding site" evidence="2">
    <location>
        <position position="354"/>
    </location>
    <ligand>
        <name>Mn(2+)</name>
        <dbReference type="ChEBI" id="CHEBI:29035"/>
        <label>1</label>
    </ligand>
</feature>
<feature type="binding site" evidence="2">
    <location>
        <position position="354"/>
    </location>
    <ligand>
        <name>Mn(2+)</name>
        <dbReference type="ChEBI" id="CHEBI:29035"/>
        <label>2</label>
    </ligand>
</feature>
<feature type="binding site" evidence="2">
    <location>
        <position position="493"/>
    </location>
    <ligand>
        <name>Mn(2+)</name>
        <dbReference type="ChEBI" id="CHEBI:29035"/>
        <label>3</label>
    </ligand>
</feature>
<feature type="binding site" evidence="2">
    <location>
        <position position="501"/>
    </location>
    <ligand>
        <name>Mn(2+)</name>
        <dbReference type="ChEBI" id="CHEBI:29035"/>
        <label>3</label>
    </ligand>
</feature>